<protein>
    <recommendedName>
        <fullName>Probable inactive histone-lysine N-methyltransferase SUVR2</fullName>
    </recommendedName>
    <alternativeName>
        <fullName>Protein SET DOMAIN GROUP 18</fullName>
    </alternativeName>
    <alternativeName>
        <fullName>Suppressor of variegation 3-9-related protein 2</fullName>
        <shortName>Su(var)3-9-related protein 2</shortName>
    </alternativeName>
</protein>
<evidence type="ECO:0000250" key="1"/>
<evidence type="ECO:0000250" key="2">
    <source>
        <dbReference type="UniProtKB" id="Q9H5I1"/>
    </source>
</evidence>
<evidence type="ECO:0000255" key="3">
    <source>
        <dbReference type="PROSITE-ProRule" id="PRU00190"/>
    </source>
</evidence>
<evidence type="ECO:0000255" key="4">
    <source>
        <dbReference type="PROSITE-ProRule" id="PRU00913"/>
    </source>
</evidence>
<evidence type="ECO:0000256" key="5">
    <source>
        <dbReference type="SAM" id="MobiDB-lite"/>
    </source>
</evidence>
<evidence type="ECO:0000269" key="6">
    <source>
    </source>
</evidence>
<evidence type="ECO:0000269" key="7">
    <source>
    </source>
</evidence>
<evidence type="ECO:0000305" key="8"/>
<name>SUVR2_ARATH</name>
<proteinExistence type="evidence at protein level"/>
<organism>
    <name type="scientific">Arabidopsis thaliana</name>
    <name type="common">Mouse-ear cress</name>
    <dbReference type="NCBI Taxonomy" id="3702"/>
    <lineage>
        <taxon>Eukaryota</taxon>
        <taxon>Viridiplantae</taxon>
        <taxon>Streptophyta</taxon>
        <taxon>Embryophyta</taxon>
        <taxon>Tracheophyta</taxon>
        <taxon>Spermatophyta</taxon>
        <taxon>Magnoliopsida</taxon>
        <taxon>eudicotyledons</taxon>
        <taxon>Gunneridae</taxon>
        <taxon>Pentapetalae</taxon>
        <taxon>rosids</taxon>
        <taxon>malvids</taxon>
        <taxon>Brassicales</taxon>
        <taxon>Brassicaceae</taxon>
        <taxon>Camelineae</taxon>
        <taxon>Arabidopsis</taxon>
    </lineage>
</organism>
<accession>Q9FNC7</accession>
<accession>Q0WKU5</accession>
<accession>Q941L4</accession>
<sequence length="717" mass="79363">MAPNLHIKKAFMAMRAMGIEDARVKPVLKNLLALYEKNWELIAEDNYRVLADAIFDSHEDQAIQESEEKKADEVKEDEGCAAEVDRGKKKLHESIEDDEDVMAESDRPLKRLRRRGEGGSALASPSLGSPTLEGPSINDEENAPILLPYHPVPIENDHDAGELILTKVEPITNMPLSSIPDSVDRGDSSMLEIDKSNGHVEEKAGETVSTADGTTNDISPTTVARFSDHKLAATIEEPPALELASSASGEVKINLSFAPATGGSNPHLPSMEELRRAMEEKCLRSYKILDPNFSVLGFMNDICSCYLDLATNGRDSANQLPKNLPFVTTNIDALKKSAARMAYTSQASNDVVEICSNEHMRDAENGAVGDSMALVVVPECQLSADEWRLISSVGDISLGKETVEIPWVNEVNDKVPPVFHYIAQSLVYQDAAVKFSLGNIRDDQCCSSCCGDCLAPSMACRCATAFNGFAYTVDGLLQEDFLEQCISEARDPRKQMLLYCKECPLEKAKKEVILEPCKGHLKRKAIKECWSKCGCMKNCGNRVVQQGIHNKLQVFFTPNGRGWGLRTLEKLPKGAFVCELAGEILTIPELFQRISDRPTSPVILDAYWGSEDISGDDKALSLEGTHYGNISRFINHRCLDANLIEIPVHAETTDSHYYHLAFFTTREIDAMEELTWDYGVPFNQDVFPTSPFHCQCGSDFCRVRKQISKGKNVKKRA</sequence>
<reference key="1">
    <citation type="journal article" date="2001" name="Nucleic Acids Res.">
        <title>The Arabidopsis thaliana genome contains at least 29 active genes encoding SET domain proteins that can be assigned to four evolutionarily conserved classes.</title>
        <authorList>
            <person name="Baumbusch L.O."/>
            <person name="Thorstensen T."/>
            <person name="Krauss V."/>
            <person name="Fischer A."/>
            <person name="Naumann K."/>
            <person name="Assalkhou R."/>
            <person name="Schulz I."/>
            <person name="Reuter G."/>
            <person name="Aalen R.B."/>
        </authorList>
    </citation>
    <scope>NUCLEOTIDE SEQUENCE [MRNA]</scope>
    <scope>NOMENCLATURE</scope>
</reference>
<reference key="2">
    <citation type="journal article" date="1997" name="DNA Res.">
        <title>Structural analysis of Arabidopsis thaliana chromosome 5. II. Sequence features of the regions of 1,044,062 bp covered by thirteen physically assigned P1 clones.</title>
        <authorList>
            <person name="Kotani H."/>
            <person name="Nakamura Y."/>
            <person name="Sato S."/>
            <person name="Kaneko T."/>
            <person name="Asamizu E."/>
            <person name="Miyajima N."/>
            <person name="Tabata S."/>
        </authorList>
    </citation>
    <scope>NUCLEOTIDE SEQUENCE [LARGE SCALE GENOMIC DNA]</scope>
    <source>
        <strain>cv. Columbia</strain>
    </source>
</reference>
<reference key="3">
    <citation type="journal article" date="2017" name="Plant J.">
        <title>Araport11: a complete reannotation of the Arabidopsis thaliana reference genome.</title>
        <authorList>
            <person name="Cheng C.Y."/>
            <person name="Krishnakumar V."/>
            <person name="Chan A.P."/>
            <person name="Thibaud-Nissen F."/>
            <person name="Schobel S."/>
            <person name="Town C.D."/>
        </authorList>
    </citation>
    <scope>GENOME REANNOTATION</scope>
    <source>
        <strain>cv. Columbia</strain>
    </source>
</reference>
<reference key="4">
    <citation type="submission" date="2006-07" db="EMBL/GenBank/DDBJ databases">
        <title>Large-scale analysis of RIKEN Arabidopsis full-length (RAFL) cDNAs.</title>
        <authorList>
            <person name="Totoki Y."/>
            <person name="Seki M."/>
            <person name="Ishida J."/>
            <person name="Nakajima M."/>
            <person name="Enju A."/>
            <person name="Kamiya A."/>
            <person name="Narusaka M."/>
            <person name="Shin-i T."/>
            <person name="Nakagawa M."/>
            <person name="Sakamoto N."/>
            <person name="Oishi K."/>
            <person name="Kohara Y."/>
            <person name="Kobayashi M."/>
            <person name="Toyoda A."/>
            <person name="Sakaki Y."/>
            <person name="Sakurai T."/>
            <person name="Iida K."/>
            <person name="Akiyama K."/>
            <person name="Satou M."/>
            <person name="Toyoda T."/>
            <person name="Konagaya A."/>
            <person name="Carninci P."/>
            <person name="Kawai J."/>
            <person name="Hayashizaki Y."/>
            <person name="Shinozaki K."/>
        </authorList>
    </citation>
    <scope>NUCLEOTIDE SEQUENCE [LARGE SCALE MRNA]</scope>
    <source>
        <strain>cv. Columbia</strain>
    </source>
</reference>
<reference key="5">
    <citation type="journal article" date="2014" name="Cell Res.">
        <title>SUVR2 is involved in transcriptional gene silencing by associating with SNF2-related chromatin-remodeling proteins in Arabidopsis.</title>
        <authorList>
            <person name="Han Y.F."/>
            <person name="Dou K."/>
            <person name="Ma Z.Y."/>
            <person name="Zhang S.W."/>
            <person name="Huang H.W."/>
            <person name="Li L."/>
            <person name="Cai T."/>
            <person name="Chen S."/>
            <person name="Zhu J.K."/>
            <person name="He X.J."/>
        </authorList>
    </citation>
    <scope>IDENTIFICATION BY MASS SPECTROMETRY</scope>
    <scope>FUNCTION</scope>
    <scope>SUBUNIT</scope>
    <scope>INTERACTION WITH SUVR1; CHR19; CHR27 AND CHR28</scope>
    <scope>SUBCELLULAR LOCATION</scope>
    <scope>MUTAGENESIS OF LEU-32; ASP-52; HIS-636 AND CYS-638</scope>
</reference>
<reference key="6">
    <citation type="journal article" date="2014" name="Proc. Natl. Acad. Sci. U.S.A.">
        <title>SNF2 chromatin remodeler-family proteins FRG1 and -2 are required for RNA-directed DNA methylation.</title>
        <authorList>
            <person name="Groth M."/>
            <person name="Stroud H."/>
            <person name="Feng S."/>
            <person name="Greenberg M.V."/>
            <person name="Vashisht A.A."/>
            <person name="Wohlschlegel J.A."/>
            <person name="Jacobsen S.E."/>
            <person name="Ausin I."/>
        </authorList>
    </citation>
    <scope>IDENTIFICATION BY MASS SPECTROMETRY</scope>
    <scope>INTERACTION WITH CHR27</scope>
</reference>
<keyword id="KW-0025">Alternative splicing</keyword>
<keyword id="KW-0156">Chromatin regulator</keyword>
<keyword id="KW-0158">Chromosome</keyword>
<keyword id="KW-0479">Metal-binding</keyword>
<keyword id="KW-0489">Methyltransferase</keyword>
<keyword id="KW-0539">Nucleus</keyword>
<keyword id="KW-1185">Reference proteome</keyword>
<keyword id="KW-0943">RNA-mediated gene silencing</keyword>
<keyword id="KW-0949">S-adenosyl-L-methionine</keyword>
<keyword id="KW-0808">Transferase</keyword>
<keyword id="KW-0862">Zinc</keyword>
<comment type="function">
    <text evidence="6">Probable inactive histone-lysine methyltransferase that acts as regulator of transctiptional gene silencing independently of histone H3K9 methylation. Contributes to transcriptional gene silencing at RNA-directed DNA methylation (RdDM) target loci but also at RdDM-independent target loci. Forms a complex with SUVR1 and associates with the SNF2-related chromatin-remodeling proteins CHR19, CHR27, and CHR28, thereby mediating nucleosome positioning and transcriptional silencing. Does not possess histone-lysine methyltransferase activity in vitro, and the conserved catalytic sites of SUVR2 are dispensable for its function in transcriptional gene silencing.</text>
</comment>
<comment type="subunit">
    <text evidence="6 7">Interacts with SUVR1, CHR19, CHR28 and itself (PubMed:25420628). Interacts with CHR27 (PubMed:25420628, PubMed:25425661).</text>
</comment>
<comment type="subcellular location">
    <subcellularLocation>
        <location evidence="6">Nucleus</location>
    </subcellularLocation>
    <subcellularLocation>
        <location evidence="6">Chromosome</location>
    </subcellularLocation>
    <text evidence="6">Displays two nuclear localization patterns, one forming condensed foci and the other showing diffused signals.</text>
</comment>
<comment type="alternative products">
    <event type="alternative splicing"/>
    <isoform>
        <id>Q9FNC7-1</id>
        <name>1</name>
        <sequence type="displayed"/>
    </isoform>
    <text>A number of isoforms are produced. According to EST sequences.</text>
</comment>
<comment type="domain">
    <text evidence="1">In the pre-SET domain, Cys residues bind 3 zinc ions that are arranged in a triangular cluster; some of these Cys residues contribute to the binding of two zinc ions within the cluster.</text>
</comment>
<comment type="similarity">
    <text evidence="4">Belongs to the class V-like SAM-binding methyltransferase superfamily. Histone-lysine methyltransferase family.</text>
</comment>
<comment type="sequence caution" evidence="8">
    <conflict type="erroneous gene model prediction">
        <sequence resource="EMBL-CDS" id="BAB09059"/>
    </conflict>
</comment>
<feature type="chain" id="PRO_0000233366" description="Probable inactive histone-lysine N-methyltransferase SUVR2">
    <location>
        <begin position="1"/>
        <end position="717"/>
    </location>
</feature>
<feature type="domain" description="Pre-SET">
    <location>
        <begin position="458"/>
        <end position="547"/>
    </location>
</feature>
<feature type="domain" description="SET" evidence="3">
    <location>
        <begin position="550"/>
        <end position="679"/>
    </location>
</feature>
<feature type="domain" description="Post-SET">
    <location>
        <begin position="690"/>
        <end position="706"/>
    </location>
</feature>
<feature type="region of interest" description="Disordered" evidence="5">
    <location>
        <begin position="61"/>
        <end position="136"/>
    </location>
</feature>
<feature type="compositionally biased region" description="Basic and acidic residues" evidence="5">
    <location>
        <begin position="61"/>
        <end position="73"/>
    </location>
</feature>
<feature type="compositionally biased region" description="Low complexity" evidence="5">
    <location>
        <begin position="120"/>
        <end position="130"/>
    </location>
</feature>
<feature type="binding site" evidence="2">
    <location>
        <position position="445"/>
    </location>
    <ligand>
        <name>Zn(2+)</name>
        <dbReference type="ChEBI" id="CHEBI:29105"/>
        <label>1</label>
    </ligand>
</feature>
<feature type="binding site" evidence="2">
    <location>
        <position position="445"/>
    </location>
    <ligand>
        <name>Zn(2+)</name>
        <dbReference type="ChEBI" id="CHEBI:29105"/>
        <label>2</label>
    </ligand>
</feature>
<feature type="binding site" evidence="2">
    <location>
        <position position="446"/>
    </location>
    <ligand>
        <name>Zn(2+)</name>
        <dbReference type="ChEBI" id="CHEBI:29105"/>
        <label>1</label>
    </ligand>
</feature>
<feature type="binding site" evidence="2">
    <location>
        <position position="449"/>
    </location>
    <ligand>
        <name>Zn(2+)</name>
        <dbReference type="ChEBI" id="CHEBI:29105"/>
        <label>1</label>
    </ligand>
</feature>
<feature type="binding site" evidence="2">
    <location>
        <position position="449"/>
    </location>
    <ligand>
        <name>Zn(2+)</name>
        <dbReference type="ChEBI" id="CHEBI:29105"/>
        <label>3</label>
    </ligand>
</feature>
<feature type="binding site" evidence="2">
    <location>
        <position position="453"/>
    </location>
    <ligand>
        <name>Zn(2+)</name>
        <dbReference type="ChEBI" id="CHEBI:29105"/>
        <label>1</label>
    </ligand>
</feature>
<feature type="binding site" evidence="2">
    <location>
        <position position="462"/>
    </location>
    <ligand>
        <name>Zn(2+)</name>
        <dbReference type="ChEBI" id="CHEBI:29105"/>
        <label>2</label>
    </ligand>
</feature>
<feature type="binding site" evidence="2">
    <location>
        <position position="529"/>
    </location>
    <ligand>
        <name>Zn(2+)</name>
        <dbReference type="ChEBI" id="CHEBI:29105"/>
        <label>2</label>
    </ligand>
</feature>
<feature type="binding site" evidence="2">
    <location>
        <position position="529"/>
    </location>
    <ligand>
        <name>Zn(2+)</name>
        <dbReference type="ChEBI" id="CHEBI:29105"/>
        <label>3</label>
    </ligand>
</feature>
<feature type="binding site" evidence="2">
    <location>
        <position position="533"/>
    </location>
    <ligand>
        <name>Zn(2+)</name>
        <dbReference type="ChEBI" id="CHEBI:29105"/>
        <label>2</label>
    </ligand>
</feature>
<feature type="binding site" evidence="2">
    <location>
        <position position="535"/>
    </location>
    <ligand>
        <name>Zn(2+)</name>
        <dbReference type="ChEBI" id="CHEBI:29105"/>
        <label>3</label>
    </ligand>
</feature>
<feature type="binding site" evidence="2">
    <location>
        <position position="539"/>
    </location>
    <ligand>
        <name>Zn(2+)</name>
        <dbReference type="ChEBI" id="CHEBI:29105"/>
        <label>3</label>
    </ligand>
</feature>
<feature type="binding site" evidence="2">
    <location>
        <begin position="561"/>
        <end position="563"/>
    </location>
    <ligand>
        <name>S-adenosyl-L-methionine</name>
        <dbReference type="ChEBI" id="CHEBI:59789"/>
    </ligand>
</feature>
<feature type="binding site" evidence="2">
    <location>
        <begin position="635"/>
        <end position="636"/>
    </location>
    <ligand>
        <name>S-adenosyl-L-methionine</name>
        <dbReference type="ChEBI" id="CHEBI:59789"/>
    </ligand>
</feature>
<feature type="binding site" evidence="2">
    <location>
        <position position="638"/>
    </location>
    <ligand>
        <name>Zn(2+)</name>
        <dbReference type="ChEBI" id="CHEBI:29105"/>
        <label>4</label>
    </ligand>
</feature>
<feature type="binding site" evidence="3">
    <location>
        <position position="678"/>
    </location>
    <ligand>
        <name>S-adenosyl-L-methionine</name>
        <dbReference type="ChEBI" id="CHEBI:59789"/>
    </ligand>
</feature>
<feature type="binding site" evidence="2">
    <location>
        <position position="694"/>
    </location>
    <ligand>
        <name>Zn(2+)</name>
        <dbReference type="ChEBI" id="CHEBI:29105"/>
        <label>4</label>
    </ligand>
</feature>
<feature type="binding site" evidence="2">
    <location>
        <position position="696"/>
    </location>
    <ligand>
        <name>Zn(2+)</name>
        <dbReference type="ChEBI" id="CHEBI:29105"/>
        <label>4</label>
    </ligand>
</feature>
<feature type="binding site" evidence="2">
    <location>
        <position position="701"/>
    </location>
    <ligand>
        <name>Zn(2+)</name>
        <dbReference type="ChEBI" id="CHEBI:29105"/>
        <label>4</label>
    </ligand>
</feature>
<feature type="mutagenesis site" description="No effect on its function in transcriptional gene silencing; when associated with A52, A636 and A638." evidence="6">
    <original>L</original>
    <variation>A</variation>
    <location>
        <position position="32"/>
    </location>
</feature>
<feature type="mutagenesis site" description="No effect on its function in transcriptional gene silencing; when associated with A32, A636 and A638." evidence="6">
    <original>D</original>
    <variation>A</variation>
    <location>
        <position position="52"/>
    </location>
</feature>
<feature type="mutagenesis site" description="No effect on its function in transcriptional gene silencing; when associated with A32, A52 and A638." evidence="6">
    <original>H</original>
    <variation>A</variation>
    <location>
        <position position="636"/>
    </location>
</feature>
<feature type="mutagenesis site" description="No effect on its function in transcriptional gene silencing; when associated with A32, A52 and A636." evidence="6">
    <original>C</original>
    <variation>A</variation>
    <location>
        <position position="638"/>
    </location>
</feature>
<feature type="sequence conflict" description="In Ref. 1; AAK92218." evidence="8" ref="1">
    <original>R</original>
    <variation>Q</variation>
    <location>
        <position position="23"/>
    </location>
</feature>
<feature type="sequence conflict" description="In Ref. 4; BAF02262." evidence="8" ref="4">
    <original>L</original>
    <variation>P</variation>
    <location>
        <position position="32"/>
    </location>
</feature>
<feature type="sequence conflict" description="In Ref. 1; AAK92218." evidence="8" ref="1">
    <original>E</original>
    <variation>D</variation>
    <location>
        <position position="36"/>
    </location>
</feature>
<gene>
    <name type="primary">SUVR2</name>
    <name type="synonym">SDG18</name>
    <name type="synonym">SET18</name>
    <name type="ordered locus">At5g43990</name>
    <name type="ORF">MRH10.10</name>
</gene>
<dbReference type="EMBL" id="AY045576">
    <property type="protein sequence ID" value="AAK92218.1"/>
    <property type="molecule type" value="mRNA"/>
</dbReference>
<dbReference type="EMBL" id="AB006703">
    <property type="protein sequence ID" value="BAB09059.1"/>
    <property type="status" value="ALT_SEQ"/>
    <property type="molecule type" value="Genomic_DNA"/>
</dbReference>
<dbReference type="EMBL" id="CP002688">
    <property type="protein sequence ID" value="AED95042.1"/>
    <property type="molecule type" value="Genomic_DNA"/>
</dbReference>
<dbReference type="EMBL" id="CP002688">
    <property type="protein sequence ID" value="AED95043.1"/>
    <property type="molecule type" value="Genomic_DNA"/>
</dbReference>
<dbReference type="EMBL" id="CP002688">
    <property type="protein sequence ID" value="AED95044.1"/>
    <property type="molecule type" value="Genomic_DNA"/>
</dbReference>
<dbReference type="EMBL" id="CP002688">
    <property type="protein sequence ID" value="ANM70135.1"/>
    <property type="molecule type" value="Genomic_DNA"/>
</dbReference>
<dbReference type="EMBL" id="AK230468">
    <property type="protein sequence ID" value="BAF02262.1"/>
    <property type="molecule type" value="mRNA"/>
</dbReference>
<dbReference type="RefSeq" id="NP_001078702.1">
    <molecule id="Q9FNC7-1"/>
    <property type="nucleotide sequence ID" value="NM_001085233.2"/>
</dbReference>
<dbReference type="RefSeq" id="NP_001078703.1">
    <molecule id="Q9FNC7-1"/>
    <property type="nucleotide sequence ID" value="NM_001085234.2"/>
</dbReference>
<dbReference type="RefSeq" id="NP_001331767.1">
    <molecule id="Q9FNC7-1"/>
    <property type="nucleotide sequence ID" value="NM_001344514.1"/>
</dbReference>
<dbReference type="RefSeq" id="NP_568631.1">
    <molecule id="Q9FNC7-1"/>
    <property type="nucleotide sequence ID" value="NM_123766.3"/>
</dbReference>
<dbReference type="SMR" id="Q9FNC7"/>
<dbReference type="BioGRID" id="19672">
    <property type="interactions" value="11"/>
</dbReference>
<dbReference type="FunCoup" id="Q9FNC7">
    <property type="interactions" value="634"/>
</dbReference>
<dbReference type="STRING" id="3702.Q9FNC7"/>
<dbReference type="PaxDb" id="3702-AT5G43990.2"/>
<dbReference type="ProteomicsDB" id="226528">
    <molecule id="Q9FNC7-1"/>
</dbReference>
<dbReference type="EnsemblPlants" id="AT5G43990.1">
    <molecule id="Q9FNC7-1"/>
    <property type="protein sequence ID" value="AT5G43990.1"/>
    <property type="gene ID" value="AT5G43990"/>
</dbReference>
<dbReference type="EnsemblPlants" id="AT5G43990.11">
    <molecule id="Q9FNC7-1"/>
    <property type="protein sequence ID" value="AT5G43990.11"/>
    <property type="gene ID" value="AT5G43990"/>
</dbReference>
<dbReference type="EnsemblPlants" id="AT5G43990.3">
    <molecule id="Q9FNC7-1"/>
    <property type="protein sequence ID" value="AT5G43990.3"/>
    <property type="gene ID" value="AT5G43990"/>
</dbReference>
<dbReference type="EnsemblPlants" id="AT5G43990.4">
    <molecule id="Q9FNC7-1"/>
    <property type="protein sequence ID" value="AT5G43990.4"/>
    <property type="gene ID" value="AT5G43990"/>
</dbReference>
<dbReference type="GeneID" id="834422"/>
<dbReference type="Gramene" id="AT5G43990.1">
    <molecule id="Q9FNC7-1"/>
    <property type="protein sequence ID" value="AT5G43990.1"/>
    <property type="gene ID" value="AT5G43990"/>
</dbReference>
<dbReference type="Gramene" id="AT5G43990.11">
    <molecule id="Q9FNC7-1"/>
    <property type="protein sequence ID" value="AT5G43990.11"/>
    <property type="gene ID" value="AT5G43990"/>
</dbReference>
<dbReference type="Gramene" id="AT5G43990.3">
    <molecule id="Q9FNC7-1"/>
    <property type="protein sequence ID" value="AT5G43990.3"/>
    <property type="gene ID" value="AT5G43990"/>
</dbReference>
<dbReference type="Gramene" id="AT5G43990.4">
    <molecule id="Q9FNC7-1"/>
    <property type="protein sequence ID" value="AT5G43990.4"/>
    <property type="gene ID" value="AT5G43990"/>
</dbReference>
<dbReference type="KEGG" id="ath:AT5G43990"/>
<dbReference type="Araport" id="AT5G43990"/>
<dbReference type="TAIR" id="AT5G43990">
    <property type="gene designation" value="SUVR2"/>
</dbReference>
<dbReference type="eggNOG" id="KOG1082">
    <property type="taxonomic scope" value="Eukaryota"/>
</dbReference>
<dbReference type="InParanoid" id="Q9FNC7"/>
<dbReference type="PhylomeDB" id="Q9FNC7"/>
<dbReference type="PRO" id="PR:Q9FNC7"/>
<dbReference type="Proteomes" id="UP000006548">
    <property type="component" value="Chromosome 5"/>
</dbReference>
<dbReference type="ExpressionAtlas" id="Q9FNC7">
    <property type="expression patterns" value="baseline and differential"/>
</dbReference>
<dbReference type="GO" id="GO:0005694">
    <property type="term" value="C:chromosome"/>
    <property type="evidence" value="ECO:0000314"/>
    <property type="project" value="UniProtKB"/>
</dbReference>
<dbReference type="GO" id="GO:0005634">
    <property type="term" value="C:nucleus"/>
    <property type="evidence" value="ECO:0000314"/>
    <property type="project" value="UniProtKB"/>
</dbReference>
<dbReference type="GO" id="GO:0042054">
    <property type="term" value="F:histone methyltransferase activity"/>
    <property type="evidence" value="ECO:0007669"/>
    <property type="project" value="InterPro"/>
</dbReference>
<dbReference type="GO" id="GO:0008270">
    <property type="term" value="F:zinc ion binding"/>
    <property type="evidence" value="ECO:0007669"/>
    <property type="project" value="InterPro"/>
</dbReference>
<dbReference type="GO" id="GO:0080188">
    <property type="term" value="P:gene silencing by siRNA-directed DNA methylation"/>
    <property type="evidence" value="ECO:0000314"/>
    <property type="project" value="UniProtKB"/>
</dbReference>
<dbReference type="GO" id="GO:0032259">
    <property type="term" value="P:methylation"/>
    <property type="evidence" value="ECO:0007669"/>
    <property type="project" value="UniProtKB-KW"/>
</dbReference>
<dbReference type="CDD" id="cd10538">
    <property type="entry name" value="SET_SETDB-like"/>
    <property type="match status" value="1"/>
</dbReference>
<dbReference type="FunFam" id="2.170.270.10:FF:000046">
    <property type="entry name" value="SET-domain containing protein lysine methyltransferase family protein"/>
    <property type="match status" value="1"/>
</dbReference>
<dbReference type="Gene3D" id="1.10.8.850">
    <property type="entry name" value="Histone-lysine N methyltransferase , C-terminal domain-like"/>
    <property type="match status" value="1"/>
</dbReference>
<dbReference type="Gene3D" id="2.170.270.10">
    <property type="entry name" value="SET domain"/>
    <property type="match status" value="1"/>
</dbReference>
<dbReference type="InterPro" id="IPR007728">
    <property type="entry name" value="Pre-SET_dom"/>
</dbReference>
<dbReference type="InterPro" id="IPR001214">
    <property type="entry name" value="SET_dom"/>
</dbReference>
<dbReference type="InterPro" id="IPR046341">
    <property type="entry name" value="SET_dom_sf"/>
</dbReference>
<dbReference type="InterPro" id="IPR025776">
    <property type="entry name" value="SUVR4/1/2"/>
</dbReference>
<dbReference type="InterPro" id="IPR043017">
    <property type="entry name" value="WIYLD_dom_sf"/>
</dbReference>
<dbReference type="InterPro" id="IPR018848">
    <property type="entry name" value="WIYLD_domain"/>
</dbReference>
<dbReference type="PANTHER" id="PTHR46450">
    <property type="entry name" value="INACTIVE HISTONE-LYSINE N-METHYLTRANSFERASE SUVR1-RELATED"/>
    <property type="match status" value="1"/>
</dbReference>
<dbReference type="PANTHER" id="PTHR46450:SF1">
    <property type="entry name" value="INACTIVE HISTONE-LYSINE N-METHYLTRANSFERASE SUVR1-RELATED"/>
    <property type="match status" value="1"/>
</dbReference>
<dbReference type="Pfam" id="PF05033">
    <property type="entry name" value="Pre-SET"/>
    <property type="match status" value="1"/>
</dbReference>
<dbReference type="Pfam" id="PF00856">
    <property type="entry name" value="SET"/>
    <property type="match status" value="1"/>
</dbReference>
<dbReference type="Pfam" id="PF10440">
    <property type="entry name" value="WIYLD"/>
    <property type="match status" value="1"/>
</dbReference>
<dbReference type="SMART" id="SM00468">
    <property type="entry name" value="PreSET"/>
    <property type="match status" value="1"/>
</dbReference>
<dbReference type="SMART" id="SM00317">
    <property type="entry name" value="SET"/>
    <property type="match status" value="1"/>
</dbReference>
<dbReference type="SUPFAM" id="SSF82199">
    <property type="entry name" value="SET domain"/>
    <property type="match status" value="1"/>
</dbReference>
<dbReference type="PROSITE" id="PS51580">
    <property type="entry name" value="SAM_MT43_3"/>
    <property type="match status" value="1"/>
</dbReference>
<dbReference type="PROSITE" id="PS50280">
    <property type="entry name" value="SET"/>
    <property type="match status" value="1"/>
</dbReference>